<gene>
    <name evidence="9" type="primary">FAM83B</name>
    <name evidence="9" type="synonym">C6orf143</name>
</gene>
<accession>Q5T0W9</accession>
<accession>Q2M1P3</accession>
<accession>Q96DQ2</accession>
<keyword id="KW-0002">3D-structure</keyword>
<keyword id="KW-0963">Cytoplasm</keyword>
<keyword id="KW-0472">Membrane</keyword>
<keyword id="KW-0597">Phosphoprotein</keyword>
<keyword id="KW-1267">Proteomics identification</keyword>
<keyword id="KW-0656">Proto-oncogene</keyword>
<keyword id="KW-1185">Reference proteome</keyword>
<name>FA83B_HUMAN</name>
<organism>
    <name type="scientific">Homo sapiens</name>
    <name type="common">Human</name>
    <dbReference type="NCBI Taxonomy" id="9606"/>
    <lineage>
        <taxon>Eukaryota</taxon>
        <taxon>Metazoa</taxon>
        <taxon>Chordata</taxon>
        <taxon>Craniata</taxon>
        <taxon>Vertebrata</taxon>
        <taxon>Euteleostomi</taxon>
        <taxon>Mammalia</taxon>
        <taxon>Eutheria</taxon>
        <taxon>Euarchontoglires</taxon>
        <taxon>Primates</taxon>
        <taxon>Haplorrhini</taxon>
        <taxon>Catarrhini</taxon>
        <taxon>Hominidae</taxon>
        <taxon>Homo</taxon>
    </lineage>
</organism>
<comment type="function">
    <text evidence="3 4 5">Probable proto-oncogene that functions in the epidermal growth factor receptor/EGFR signaling pathway. Activates both the EGFR itself and downstream RAS/MAPK and PI3K/AKT/TOR signaling cascades.</text>
</comment>
<comment type="subunit">
    <text evidence="3 4 5 6">Interacts with EGFR; positively regulates EGFR inducing its autophosphorylation in absence of stimulation by EGF (PubMed:23912460). Interacts with RAF1; displaces 14-3-3 proteins from RAF1 and activates RAF1 within the RAS/MAPK signaling cascade (PubMed:22886302). Interacts with AKT1, PIK3CA and PIK3R1; activates the PI3K/AKT signaling cascade (PubMed:23676467). Directly interacts (via DUF1669) with casein kinase isoforms CSNK1A1, CSNK1A1L, CSNK1D and CSNK1E (PubMed:29789297).</text>
</comment>
<comment type="interaction">
    <interactant intactId="EBI-2556565">
        <id>Q5T0W9</id>
    </interactant>
    <interactant intactId="EBI-1383726">
        <id>P48729</id>
        <label>CSNK1A1</label>
    </interactant>
    <organismsDiffer>false</organismsDiffer>
    <experiments>9</experiments>
</comment>
<comment type="subcellular location">
    <subcellularLocation>
        <location evidence="3">Cytoplasm</location>
    </subcellularLocation>
    <subcellularLocation>
        <location evidence="3">Membrane</location>
    </subcellularLocation>
</comment>
<comment type="domain">
    <text evidence="8">All members of the FAM83 family of proteins share a conserved N-terminal DUF1669 (domain of unknown function 1669) domain of about 300 amino acids. This domain mediates the interaction with casein kinase 1 (CK1) isoforms. Therefore, it has been proposed to rename DUF1669 the polypeptide anchor of CK1 domain.</text>
</comment>
<comment type="PTM">
    <text evidence="6">Phosphorylated in vitro by CSNK1A1.</text>
</comment>
<comment type="similarity">
    <text evidence="7">Belongs to the FAM83 family.</text>
</comment>
<sequence>METSSMLSSLNDECKSDNYIEPHYKEWYRVAIDILIEHGLEAYQEFLVQERVSDFLAEEEINYILKNVQKVAQSTAHGTDDSCDDTLSSGTYWPVESDVEAPNLDLGWPYVMPGLLGGTHIDLLFHPPRAHLLTIKETIRKMIKEARKVIALVMDIFTDVDIFKEIVEASTRGVSVYILLDESNFNHFLNMTEKQGCSVQRLRNIRVRTVKGQDYLSKTGAKFHGKMEQKFLLVDCQKVMYGSYSYMWSFEKAHLSMVQIITGQLVESFDEEFRTLYARSCVPSSFAQEESARVKHGKALWENGTYQHSVSSLASVSSQRNLFGRQDKIHKLDSSYFKNRGIYTLNEHDKYNIRSHGYKPHFVPNFNGPNAIRQFQPNQINENWKRHSYAGEQPETVPYLLLNRALNRTNNPPGNWKKPSDSLSVASSSREGYVSHHNTPAQSFANRLAQRKTTNLADRNSNVRRSFNGTDNHIRFLQQRMPTLEHTTKSFLRNWRIESYLNDHSEATPDSNGSALGDRFEGYDNPENLKANALYTHSRLRSSLVFKPTLPEQKEVNSCTTGSSNSTIIGSQGSETPKEVPDTPTNVQHLTDKPLPESIPKLPLQSEAPKMHTLQVPENHSVALNQTTNGHTESNNYIYKTLGVNKQTENLKNQQTENLLKRRSFPLFDNSKANLDPGNSKHYVYSTLTRNRVRQPEKPKEDLLKSSKSMHNVTHNLEEDEEEVTKRNSPSGTTTKSVSIAALLDVNKEESNKELASKKEVKGSPSFLKKGSQKLRSLLSLTPDKKENLSKNKAPAFYRLCSSSDTLVSEGEENQKPKKSDTKVDSSPRRKHSSSSNSQGSIHKSKEDVTVSPSQEINAPPDENKRTPSPGPVESKFLERAGDASAPRFNTEQIQYRDSREINAVVTPERRPTSSPRPTSSELLRSHSTDRRVYSRFEPFCKIESSIQPTSNMPNTSINRPEIKSATMGNSYGRSSPLLNYNTGVYRSYQPNENKFRGFMQKFGNFIHKNK</sequence>
<proteinExistence type="evidence at protein level"/>
<feature type="chain" id="PRO_0000297562" description="Protein FAM83B">
    <location>
        <begin position="1"/>
        <end position="1011"/>
    </location>
</feature>
<feature type="region of interest" description="Required for interaction with RAF1 and for the function" evidence="3">
    <location>
        <begin position="1"/>
        <end position="284"/>
    </location>
</feature>
<feature type="region of interest" description="DUF1669" evidence="8">
    <location>
        <begin position="1"/>
        <end position="283"/>
    </location>
</feature>
<feature type="region of interest" description="Disordered" evidence="1">
    <location>
        <begin position="555"/>
        <end position="585"/>
    </location>
</feature>
<feature type="region of interest" description="Disordered" evidence="1">
    <location>
        <begin position="691"/>
        <end position="738"/>
    </location>
</feature>
<feature type="region of interest" description="Disordered" evidence="1">
    <location>
        <begin position="750"/>
        <end position="769"/>
    </location>
</feature>
<feature type="region of interest" description="Disordered" evidence="1">
    <location>
        <begin position="807"/>
        <end position="928"/>
    </location>
</feature>
<feature type="compositionally biased region" description="Low complexity" evidence="1">
    <location>
        <begin position="557"/>
        <end position="574"/>
    </location>
</feature>
<feature type="compositionally biased region" description="Basic and acidic residues" evidence="1">
    <location>
        <begin position="694"/>
        <end position="705"/>
    </location>
</feature>
<feature type="compositionally biased region" description="Polar residues" evidence="1">
    <location>
        <begin position="706"/>
        <end position="715"/>
    </location>
</feature>
<feature type="compositionally biased region" description="Polar residues" evidence="1">
    <location>
        <begin position="727"/>
        <end position="738"/>
    </location>
</feature>
<feature type="compositionally biased region" description="Basic and acidic residues" evidence="1">
    <location>
        <begin position="750"/>
        <end position="762"/>
    </location>
</feature>
<feature type="compositionally biased region" description="Basic and acidic residues" evidence="1">
    <location>
        <begin position="813"/>
        <end position="828"/>
    </location>
</feature>
<feature type="compositionally biased region" description="Low complexity" evidence="1">
    <location>
        <begin position="913"/>
        <end position="923"/>
    </location>
</feature>
<feature type="modified residue" description="Phosphoserine" evidence="12">
    <location>
        <position position="334"/>
    </location>
</feature>
<feature type="modified residue" description="Phosphoserine" evidence="10">
    <location>
        <position position="422"/>
    </location>
</feature>
<feature type="modified residue" description="Phosphoserine" evidence="10">
    <location>
        <position position="424"/>
    </location>
</feature>
<feature type="modified residue" description="Phosphoserine" evidence="10 11 12">
    <location>
        <position position="466"/>
    </location>
</feature>
<feature type="modified residue" description="Phosphoserine" evidence="12">
    <location>
        <position position="543"/>
    </location>
</feature>
<feature type="modified residue" description="Phosphoserine" evidence="10 12">
    <location>
        <position position="664"/>
    </location>
</feature>
<feature type="modified residue" description="Phosphothreonine" evidence="10 11 12">
    <location>
        <position position="782"/>
    </location>
</feature>
<feature type="modified residue" description="Phosphoserine" evidence="10 12">
    <location>
        <position position="802"/>
    </location>
</feature>
<feature type="modified residue" description="Phosphoserine" evidence="10">
    <location>
        <position position="852"/>
    </location>
</feature>
<feature type="modified residue" description="Phosphoserine" evidence="12">
    <location>
        <position position="869"/>
    </location>
</feature>
<feature type="modified residue" description="Phosphoserine" evidence="12">
    <location>
        <position position="915"/>
    </location>
</feature>
<feature type="sequence variant" id="VAR_034638" description="In dbSNP:rs13211183.">
    <original>N</original>
    <variation>S</variation>
    <location>
        <position position="410"/>
    </location>
</feature>
<feature type="sequence variant" id="VAR_034639" description="In dbSNP:rs9475076.">
    <original>S</original>
    <variation>R</variation>
    <location>
        <position position="435"/>
    </location>
</feature>
<feature type="sequence variant" id="VAR_034640" description="In dbSNP:rs239798." evidence="2">
    <original>K</original>
    <variation>T</variation>
    <location>
        <position position="640"/>
    </location>
</feature>
<feature type="sequence variant" id="VAR_034641" description="In dbSNP:rs9475077." evidence="2">
    <original>T</original>
    <variation>N</variation>
    <location>
        <position position="907"/>
    </location>
</feature>
<feature type="mutagenesis site" description="Loss of interaction with EGFR. Loss of activation of EGFR." evidence="5">
    <original>K</original>
    <variation>A</variation>
    <location>
        <position position="230"/>
    </location>
</feature>
<feature type="sequence conflict" description="In Ref. 4; BAB70873." evidence="7" ref="4">
    <original>D</original>
    <variation>G</variation>
    <location>
        <position position="349"/>
    </location>
</feature>
<feature type="sequence conflict" description="In Ref. 4; BAB70873." evidence="7" ref="4">
    <original>K</original>
    <variation>E</variation>
    <location>
        <position position="417"/>
    </location>
</feature>
<feature type="sequence conflict" description="In Ref. 4; BAB70873." evidence="7" ref="4">
    <original>R</original>
    <variation>S</variation>
    <location>
        <position position="541"/>
    </location>
</feature>
<feature type="strand" evidence="13">
    <location>
        <begin position="120"/>
        <end position="127"/>
    </location>
</feature>
<feature type="strand" evidence="13">
    <location>
        <begin position="130"/>
        <end position="133"/>
    </location>
</feature>
<feature type="helix" evidence="13">
    <location>
        <begin position="135"/>
        <end position="144"/>
    </location>
</feature>
<feature type="strand" evidence="13">
    <location>
        <begin position="147"/>
        <end position="155"/>
    </location>
</feature>
<feature type="helix" evidence="13">
    <location>
        <begin position="160"/>
        <end position="171"/>
    </location>
</feature>
<feature type="strand" evidence="13">
    <location>
        <begin position="175"/>
        <end position="181"/>
    </location>
</feature>
<feature type="helix" evidence="13">
    <location>
        <begin position="182"/>
        <end position="184"/>
    </location>
</feature>
<feature type="helix" evidence="13">
    <location>
        <begin position="185"/>
        <end position="194"/>
    </location>
</feature>
<feature type="helix" evidence="13">
    <location>
        <begin position="199"/>
        <end position="201"/>
    </location>
</feature>
<feature type="strand" evidence="13">
    <location>
        <begin position="205"/>
        <end position="210"/>
    </location>
</feature>
<feature type="strand" evidence="13">
    <location>
        <begin position="214"/>
        <end position="216"/>
    </location>
</feature>
<feature type="strand" evidence="13">
    <location>
        <begin position="222"/>
        <end position="224"/>
    </location>
</feature>
<feature type="strand" evidence="13">
    <location>
        <begin position="231"/>
        <end position="234"/>
    </location>
</feature>
<feature type="turn" evidence="13">
    <location>
        <begin position="235"/>
        <end position="237"/>
    </location>
</feature>
<feature type="strand" evidence="13">
    <location>
        <begin position="238"/>
        <end position="243"/>
    </location>
</feature>
<feature type="helix" evidence="13">
    <location>
        <begin position="249"/>
        <end position="252"/>
    </location>
</feature>
<feature type="strand" evidence="13">
    <location>
        <begin position="255"/>
        <end position="263"/>
    </location>
</feature>
<feature type="helix" evidence="13">
    <location>
        <begin position="265"/>
        <end position="279"/>
    </location>
</feature>
<reference key="1">
    <citation type="journal article" date="2003" name="Nature">
        <title>The DNA sequence and analysis of human chromosome 6.</title>
        <authorList>
            <person name="Mungall A.J."/>
            <person name="Palmer S.A."/>
            <person name="Sims S.K."/>
            <person name="Edwards C.A."/>
            <person name="Ashurst J.L."/>
            <person name="Wilming L."/>
            <person name="Jones M.C."/>
            <person name="Horton R."/>
            <person name="Hunt S.E."/>
            <person name="Scott C.E."/>
            <person name="Gilbert J.G.R."/>
            <person name="Clamp M.E."/>
            <person name="Bethel G."/>
            <person name="Milne S."/>
            <person name="Ainscough R."/>
            <person name="Almeida J.P."/>
            <person name="Ambrose K.D."/>
            <person name="Andrews T.D."/>
            <person name="Ashwell R.I.S."/>
            <person name="Babbage A.K."/>
            <person name="Bagguley C.L."/>
            <person name="Bailey J."/>
            <person name="Banerjee R."/>
            <person name="Barker D.J."/>
            <person name="Barlow K.F."/>
            <person name="Bates K."/>
            <person name="Beare D.M."/>
            <person name="Beasley H."/>
            <person name="Beasley O."/>
            <person name="Bird C.P."/>
            <person name="Blakey S.E."/>
            <person name="Bray-Allen S."/>
            <person name="Brook J."/>
            <person name="Brown A.J."/>
            <person name="Brown J.Y."/>
            <person name="Burford D.C."/>
            <person name="Burrill W."/>
            <person name="Burton J."/>
            <person name="Carder C."/>
            <person name="Carter N.P."/>
            <person name="Chapman J.C."/>
            <person name="Clark S.Y."/>
            <person name="Clark G."/>
            <person name="Clee C.M."/>
            <person name="Clegg S."/>
            <person name="Cobley V."/>
            <person name="Collier R.E."/>
            <person name="Collins J.E."/>
            <person name="Colman L.K."/>
            <person name="Corby N.R."/>
            <person name="Coville G.J."/>
            <person name="Culley K.M."/>
            <person name="Dhami P."/>
            <person name="Davies J."/>
            <person name="Dunn M."/>
            <person name="Earthrowl M.E."/>
            <person name="Ellington A.E."/>
            <person name="Evans K.A."/>
            <person name="Faulkner L."/>
            <person name="Francis M.D."/>
            <person name="Frankish A."/>
            <person name="Frankland J."/>
            <person name="French L."/>
            <person name="Garner P."/>
            <person name="Garnett J."/>
            <person name="Ghori M.J."/>
            <person name="Gilby L.M."/>
            <person name="Gillson C.J."/>
            <person name="Glithero R.J."/>
            <person name="Grafham D.V."/>
            <person name="Grant M."/>
            <person name="Gribble S."/>
            <person name="Griffiths C."/>
            <person name="Griffiths M.N.D."/>
            <person name="Hall R."/>
            <person name="Halls K.S."/>
            <person name="Hammond S."/>
            <person name="Harley J.L."/>
            <person name="Hart E.A."/>
            <person name="Heath P.D."/>
            <person name="Heathcott R."/>
            <person name="Holmes S.J."/>
            <person name="Howden P.J."/>
            <person name="Howe K.L."/>
            <person name="Howell G.R."/>
            <person name="Huckle E."/>
            <person name="Humphray S.J."/>
            <person name="Humphries M.D."/>
            <person name="Hunt A.R."/>
            <person name="Johnson C.M."/>
            <person name="Joy A.A."/>
            <person name="Kay M."/>
            <person name="Keenan S.J."/>
            <person name="Kimberley A.M."/>
            <person name="King A."/>
            <person name="Laird G.K."/>
            <person name="Langford C."/>
            <person name="Lawlor S."/>
            <person name="Leongamornlert D.A."/>
            <person name="Leversha M."/>
            <person name="Lloyd C.R."/>
            <person name="Lloyd D.M."/>
            <person name="Loveland J.E."/>
            <person name="Lovell J."/>
            <person name="Martin S."/>
            <person name="Mashreghi-Mohammadi M."/>
            <person name="Maslen G.L."/>
            <person name="Matthews L."/>
            <person name="McCann O.T."/>
            <person name="McLaren S.J."/>
            <person name="McLay K."/>
            <person name="McMurray A."/>
            <person name="Moore M.J.F."/>
            <person name="Mullikin J.C."/>
            <person name="Niblett D."/>
            <person name="Nickerson T."/>
            <person name="Novik K.L."/>
            <person name="Oliver K."/>
            <person name="Overton-Larty E.K."/>
            <person name="Parker A."/>
            <person name="Patel R."/>
            <person name="Pearce A.V."/>
            <person name="Peck A.I."/>
            <person name="Phillimore B.J.C.T."/>
            <person name="Phillips S."/>
            <person name="Plumb R.W."/>
            <person name="Porter K.M."/>
            <person name="Ramsey Y."/>
            <person name="Ranby S.A."/>
            <person name="Rice C.M."/>
            <person name="Ross M.T."/>
            <person name="Searle S.M."/>
            <person name="Sehra H.K."/>
            <person name="Sheridan E."/>
            <person name="Skuce C.D."/>
            <person name="Smith S."/>
            <person name="Smith M."/>
            <person name="Spraggon L."/>
            <person name="Squares S.L."/>
            <person name="Steward C.A."/>
            <person name="Sycamore N."/>
            <person name="Tamlyn-Hall G."/>
            <person name="Tester J."/>
            <person name="Theaker A.J."/>
            <person name="Thomas D.W."/>
            <person name="Thorpe A."/>
            <person name="Tracey A."/>
            <person name="Tromans A."/>
            <person name="Tubby B."/>
            <person name="Wall M."/>
            <person name="Wallis J.M."/>
            <person name="West A.P."/>
            <person name="White S.S."/>
            <person name="Whitehead S.L."/>
            <person name="Whittaker H."/>
            <person name="Wild A."/>
            <person name="Willey D.J."/>
            <person name="Wilmer T.E."/>
            <person name="Wood J.M."/>
            <person name="Wray P.W."/>
            <person name="Wyatt J.C."/>
            <person name="Young L."/>
            <person name="Younger R.M."/>
            <person name="Bentley D.R."/>
            <person name="Coulson A."/>
            <person name="Durbin R.M."/>
            <person name="Hubbard T."/>
            <person name="Sulston J.E."/>
            <person name="Dunham I."/>
            <person name="Rogers J."/>
            <person name="Beck S."/>
        </authorList>
    </citation>
    <scope>NUCLEOTIDE SEQUENCE [LARGE SCALE GENOMIC DNA]</scope>
</reference>
<reference key="2">
    <citation type="submission" date="2005-09" db="EMBL/GenBank/DDBJ databases">
        <authorList>
            <person name="Mural R.J."/>
            <person name="Istrail S."/>
            <person name="Sutton G.G."/>
            <person name="Florea L."/>
            <person name="Halpern A.L."/>
            <person name="Mobarry C.M."/>
            <person name="Lippert R."/>
            <person name="Walenz B."/>
            <person name="Shatkay H."/>
            <person name="Dew I."/>
            <person name="Miller J.R."/>
            <person name="Flanigan M.J."/>
            <person name="Edwards N.J."/>
            <person name="Bolanos R."/>
            <person name="Fasulo D."/>
            <person name="Halldorsson B.V."/>
            <person name="Hannenhalli S."/>
            <person name="Turner R."/>
            <person name="Yooseph S."/>
            <person name="Lu F."/>
            <person name="Nusskern D.R."/>
            <person name="Shue B.C."/>
            <person name="Zheng X.H."/>
            <person name="Zhong F."/>
            <person name="Delcher A.L."/>
            <person name="Huson D.H."/>
            <person name="Kravitz S.A."/>
            <person name="Mouchard L."/>
            <person name="Reinert K."/>
            <person name="Remington K.A."/>
            <person name="Clark A.G."/>
            <person name="Waterman M.S."/>
            <person name="Eichler E.E."/>
            <person name="Adams M.D."/>
            <person name="Hunkapiller M.W."/>
            <person name="Myers E.W."/>
            <person name="Venter J.C."/>
        </authorList>
    </citation>
    <scope>NUCLEOTIDE SEQUENCE [LARGE SCALE GENOMIC DNA]</scope>
</reference>
<reference key="3">
    <citation type="journal article" date="2004" name="Genome Res.">
        <title>The status, quality, and expansion of the NIH full-length cDNA project: the Mammalian Gene Collection (MGC).</title>
        <authorList>
            <consortium name="The MGC Project Team"/>
        </authorList>
    </citation>
    <scope>NUCLEOTIDE SEQUENCE [LARGE SCALE MRNA]</scope>
    <scope>VARIANTS THR-640 AND ASN-907</scope>
    <source>
        <tissue>Heart</tissue>
        <tissue>Lung</tissue>
    </source>
</reference>
<reference key="4">
    <citation type="journal article" date="2004" name="Nat. Genet.">
        <title>Complete sequencing and characterization of 21,243 full-length human cDNAs.</title>
        <authorList>
            <person name="Ota T."/>
            <person name="Suzuki Y."/>
            <person name="Nishikawa T."/>
            <person name="Otsuki T."/>
            <person name="Sugiyama T."/>
            <person name="Irie R."/>
            <person name="Wakamatsu A."/>
            <person name="Hayashi K."/>
            <person name="Sato H."/>
            <person name="Nagai K."/>
            <person name="Kimura K."/>
            <person name="Makita H."/>
            <person name="Sekine M."/>
            <person name="Obayashi M."/>
            <person name="Nishi T."/>
            <person name="Shibahara T."/>
            <person name="Tanaka T."/>
            <person name="Ishii S."/>
            <person name="Yamamoto J."/>
            <person name="Saito K."/>
            <person name="Kawai Y."/>
            <person name="Isono Y."/>
            <person name="Nakamura Y."/>
            <person name="Nagahari K."/>
            <person name="Murakami K."/>
            <person name="Yasuda T."/>
            <person name="Iwayanagi T."/>
            <person name="Wagatsuma M."/>
            <person name="Shiratori A."/>
            <person name="Sudo H."/>
            <person name="Hosoiri T."/>
            <person name="Kaku Y."/>
            <person name="Kodaira H."/>
            <person name="Kondo H."/>
            <person name="Sugawara M."/>
            <person name="Takahashi M."/>
            <person name="Kanda K."/>
            <person name="Yokoi T."/>
            <person name="Furuya T."/>
            <person name="Kikkawa E."/>
            <person name="Omura Y."/>
            <person name="Abe K."/>
            <person name="Kamihara K."/>
            <person name="Katsuta N."/>
            <person name="Sato K."/>
            <person name="Tanikawa M."/>
            <person name="Yamazaki M."/>
            <person name="Ninomiya K."/>
            <person name="Ishibashi T."/>
            <person name="Yamashita H."/>
            <person name="Murakawa K."/>
            <person name="Fujimori K."/>
            <person name="Tanai H."/>
            <person name="Kimata M."/>
            <person name="Watanabe M."/>
            <person name="Hiraoka S."/>
            <person name="Chiba Y."/>
            <person name="Ishida S."/>
            <person name="Ono Y."/>
            <person name="Takiguchi S."/>
            <person name="Watanabe S."/>
            <person name="Yosida M."/>
            <person name="Hotuta T."/>
            <person name="Kusano J."/>
            <person name="Kanehori K."/>
            <person name="Takahashi-Fujii A."/>
            <person name="Hara H."/>
            <person name="Tanase T.-O."/>
            <person name="Nomura Y."/>
            <person name="Togiya S."/>
            <person name="Komai F."/>
            <person name="Hara R."/>
            <person name="Takeuchi K."/>
            <person name="Arita M."/>
            <person name="Imose N."/>
            <person name="Musashino K."/>
            <person name="Yuuki H."/>
            <person name="Oshima A."/>
            <person name="Sasaki N."/>
            <person name="Aotsuka S."/>
            <person name="Yoshikawa Y."/>
            <person name="Matsunawa H."/>
            <person name="Ichihara T."/>
            <person name="Shiohata N."/>
            <person name="Sano S."/>
            <person name="Moriya S."/>
            <person name="Momiyama H."/>
            <person name="Satoh N."/>
            <person name="Takami S."/>
            <person name="Terashima Y."/>
            <person name="Suzuki O."/>
            <person name="Nakagawa S."/>
            <person name="Senoh A."/>
            <person name="Mizoguchi H."/>
            <person name="Goto Y."/>
            <person name="Shimizu F."/>
            <person name="Wakebe H."/>
            <person name="Hishigaki H."/>
            <person name="Watanabe T."/>
            <person name="Sugiyama A."/>
            <person name="Takemoto M."/>
            <person name="Kawakami B."/>
            <person name="Yamazaki M."/>
            <person name="Watanabe K."/>
            <person name="Kumagai A."/>
            <person name="Itakura S."/>
            <person name="Fukuzumi Y."/>
            <person name="Fujimori Y."/>
            <person name="Komiyama M."/>
            <person name="Tashiro H."/>
            <person name="Tanigami A."/>
            <person name="Fujiwara T."/>
            <person name="Ono T."/>
            <person name="Yamada K."/>
            <person name="Fujii Y."/>
            <person name="Ozaki K."/>
            <person name="Hirao M."/>
            <person name="Ohmori Y."/>
            <person name="Kawabata A."/>
            <person name="Hikiji T."/>
            <person name="Kobatake N."/>
            <person name="Inagaki H."/>
            <person name="Ikema Y."/>
            <person name="Okamoto S."/>
            <person name="Okitani R."/>
            <person name="Kawakami T."/>
            <person name="Noguchi S."/>
            <person name="Itoh T."/>
            <person name="Shigeta K."/>
            <person name="Senba T."/>
            <person name="Matsumura K."/>
            <person name="Nakajima Y."/>
            <person name="Mizuno T."/>
            <person name="Morinaga M."/>
            <person name="Sasaki M."/>
            <person name="Togashi T."/>
            <person name="Oyama M."/>
            <person name="Hata H."/>
            <person name="Watanabe M."/>
            <person name="Komatsu T."/>
            <person name="Mizushima-Sugano J."/>
            <person name="Satoh T."/>
            <person name="Shirai Y."/>
            <person name="Takahashi Y."/>
            <person name="Nakagawa K."/>
            <person name="Okumura K."/>
            <person name="Nagase T."/>
            <person name="Nomura N."/>
            <person name="Kikuchi H."/>
            <person name="Masuho Y."/>
            <person name="Yamashita R."/>
            <person name="Nakai K."/>
            <person name="Yada T."/>
            <person name="Nakamura Y."/>
            <person name="Ohara O."/>
            <person name="Isogai T."/>
            <person name="Sugano S."/>
        </authorList>
    </citation>
    <scope>NUCLEOTIDE SEQUENCE [LARGE SCALE MRNA] OF 1-811</scope>
    <source>
        <tissue>Tongue</tissue>
    </source>
</reference>
<reference key="5">
    <citation type="journal article" date="2008" name="Proc. Natl. Acad. Sci. U.S.A.">
        <title>A quantitative atlas of mitotic phosphorylation.</title>
        <authorList>
            <person name="Dephoure N."/>
            <person name="Zhou C."/>
            <person name="Villen J."/>
            <person name="Beausoleil S.A."/>
            <person name="Bakalarski C.E."/>
            <person name="Elledge S.J."/>
            <person name="Gygi S.P."/>
        </authorList>
    </citation>
    <scope>PHOSPHORYLATION [LARGE SCALE ANALYSIS] AT SER-422; SER-424; SER-466; SER-664; THR-782; SER-802 AND SER-852</scope>
    <scope>IDENTIFICATION BY MASS SPECTROMETRY [LARGE SCALE ANALYSIS]</scope>
    <source>
        <tissue>Cervix carcinoma</tissue>
    </source>
</reference>
<reference key="6">
    <citation type="journal article" date="2010" name="Sci. Signal.">
        <title>Quantitative phosphoproteomics reveals widespread full phosphorylation site occupancy during mitosis.</title>
        <authorList>
            <person name="Olsen J.V."/>
            <person name="Vermeulen M."/>
            <person name="Santamaria A."/>
            <person name="Kumar C."/>
            <person name="Miller M.L."/>
            <person name="Jensen L.J."/>
            <person name="Gnad F."/>
            <person name="Cox J."/>
            <person name="Jensen T.S."/>
            <person name="Nigg E.A."/>
            <person name="Brunak S."/>
            <person name="Mann M."/>
        </authorList>
    </citation>
    <scope>PHOSPHORYLATION [LARGE SCALE ANALYSIS] AT SER-466 AND THR-782</scope>
    <scope>IDENTIFICATION BY MASS SPECTROMETRY [LARGE SCALE ANALYSIS]</scope>
    <source>
        <tissue>Cervix carcinoma</tissue>
    </source>
</reference>
<reference key="7">
    <citation type="journal article" date="2011" name="Sci. Signal.">
        <title>System-wide temporal characterization of the proteome and phosphoproteome of human embryonic stem cell differentiation.</title>
        <authorList>
            <person name="Rigbolt K.T."/>
            <person name="Prokhorova T.A."/>
            <person name="Akimov V."/>
            <person name="Henningsen J."/>
            <person name="Johansen P.T."/>
            <person name="Kratchmarova I."/>
            <person name="Kassem M."/>
            <person name="Mann M."/>
            <person name="Olsen J.V."/>
            <person name="Blagoev B."/>
        </authorList>
    </citation>
    <scope>IDENTIFICATION BY MASS SPECTROMETRY [LARGE SCALE ANALYSIS]</scope>
</reference>
<reference key="8">
    <citation type="journal article" date="2012" name="J. Clin. Invest.">
        <title>FAM83B mediates EGFR- and RAS-driven oncogenic transformation.</title>
        <authorList>
            <person name="Cipriano R."/>
            <person name="Graham J."/>
            <person name="Miskimen K.L."/>
            <person name="Bryson B.L."/>
            <person name="Bruntz R.C."/>
            <person name="Scott S.A."/>
            <person name="Brown H.A."/>
            <person name="Stark G.R."/>
            <person name="Jackson M.W."/>
        </authorList>
    </citation>
    <scope>FUNCTION</scope>
    <scope>INTERACTION WITH RAF1</scope>
    <scope>SUBCELLULAR LOCATION</scope>
    <scope>REGION</scope>
</reference>
<reference key="9">
    <citation type="journal article" date="2013" name="J. Proteome Res.">
        <title>Toward a comprehensive characterization of a human cancer cell phosphoproteome.</title>
        <authorList>
            <person name="Zhou H."/>
            <person name="Di Palma S."/>
            <person name="Preisinger C."/>
            <person name="Peng M."/>
            <person name="Polat A.N."/>
            <person name="Heck A.J."/>
            <person name="Mohammed S."/>
        </authorList>
    </citation>
    <scope>PHOSPHORYLATION [LARGE SCALE ANALYSIS] AT SER-334; SER-466; SER-543; SER-664; THR-782; SER-802; SER-869 AND SER-915</scope>
    <scope>IDENTIFICATION BY MASS SPECTROMETRY [LARGE SCALE ANALYSIS]</scope>
    <source>
        <tissue>Cervix carcinoma</tissue>
    </source>
</reference>
<reference key="10">
    <citation type="journal article" date="2013" name="Oncotarget">
        <title>FAM83B-mediated activation of PI3K/AKT and MAPK signaling cooperates to promote epithelial cell transformation and resistance to targeted therapies.</title>
        <authorList>
            <person name="Cipriano R."/>
            <person name="Miskimen K.L."/>
            <person name="Bryson B.L."/>
            <person name="Foy C.R."/>
            <person name="Bartel C.A."/>
            <person name="Jackson M.W."/>
        </authorList>
    </citation>
    <scope>FUNCTION</scope>
    <scope>INTERACTION WITH AKT1; PIK3CA AND PIK3R1</scope>
</reference>
<reference key="11">
    <citation type="journal article" date="2014" name="Oncogene">
        <title>Hyperactivation of EGFR and downstream effector phospholipase D1 by oncogenic FAM83B.</title>
        <authorList>
            <person name="Cipriano R."/>
            <person name="Bryson B.L."/>
            <person name="Miskimen K.L."/>
            <person name="Bartel C.A."/>
            <person name="Hernandez-Sanchez W."/>
            <person name="Bruntz R.C."/>
            <person name="Scott S.A."/>
            <person name="Lindsley C.W."/>
            <person name="Brown H.A."/>
            <person name="Jackson M.W."/>
        </authorList>
    </citation>
    <scope>FUNCTION</scope>
    <scope>INTERACTION WITH EGFR</scope>
    <scope>MUTAGENESIS OF LYS-230</scope>
</reference>
<reference key="12">
    <citation type="journal article" date="2018" name="Sci. Signal.">
        <title>The DUF1669 domain of FAM83 family proteins anchor casein kinase 1 isoforms.</title>
        <authorList>
            <person name="Fulcher L.J."/>
            <person name="Bozatzi P."/>
            <person name="Tachie-Menson T."/>
            <person name="Wu K.Z.L."/>
            <person name="Cummins T.D."/>
            <person name="Bufton J.C."/>
            <person name="Pinkas D.M."/>
            <person name="Dunbar K."/>
            <person name="Shrestha S."/>
            <person name="Wood N.T."/>
            <person name="Weidlich S."/>
            <person name="Macartney T.J."/>
            <person name="Varghese J."/>
            <person name="Gourlay R."/>
            <person name="Campbell D.G."/>
            <person name="Dingwell K.S."/>
            <person name="Smith J.C."/>
            <person name="Bullock A.N."/>
            <person name="Sapkota G.P."/>
        </authorList>
    </citation>
    <scope>INTERACTION WITH CSNK1A1; CSNK1A1L; CSNK1D AND CSNK1E</scope>
    <scope>PHOSPHORYLATION</scope>
</reference>
<dbReference type="EMBL" id="AL512363">
    <property type="status" value="NOT_ANNOTATED_CDS"/>
    <property type="molecule type" value="Genomic_DNA"/>
</dbReference>
<dbReference type="EMBL" id="AL049555">
    <property type="status" value="NOT_ANNOTATED_CDS"/>
    <property type="molecule type" value="Genomic_DNA"/>
</dbReference>
<dbReference type="EMBL" id="CH471081">
    <property type="protein sequence ID" value="EAX04439.1"/>
    <property type="molecule type" value="Genomic_DNA"/>
</dbReference>
<dbReference type="EMBL" id="BC101628">
    <property type="protein sequence ID" value="AAI01629.1"/>
    <property type="molecule type" value="mRNA"/>
</dbReference>
<dbReference type="EMBL" id="BC112275">
    <property type="protein sequence ID" value="AAI12276.1"/>
    <property type="molecule type" value="mRNA"/>
</dbReference>
<dbReference type="EMBL" id="AK055204">
    <property type="protein sequence ID" value="BAB70873.1"/>
    <property type="molecule type" value="mRNA"/>
</dbReference>
<dbReference type="CCDS" id="CCDS34479.1"/>
<dbReference type="RefSeq" id="NP_001010872.1">
    <property type="nucleotide sequence ID" value="NM_001010872.3"/>
</dbReference>
<dbReference type="RefSeq" id="XP_006715085.1">
    <property type="nucleotide sequence ID" value="XM_006715022.4"/>
</dbReference>
<dbReference type="RefSeq" id="XP_011512696.1">
    <property type="nucleotide sequence ID" value="XM_011514394.3"/>
</dbReference>
<dbReference type="RefSeq" id="XP_011512697.1">
    <property type="nucleotide sequence ID" value="XM_011514395.3"/>
</dbReference>
<dbReference type="RefSeq" id="XP_016865967.1">
    <property type="nucleotide sequence ID" value="XM_017010478.2"/>
</dbReference>
<dbReference type="RefSeq" id="XP_054210623.1">
    <property type="nucleotide sequence ID" value="XM_054354648.1"/>
</dbReference>
<dbReference type="RefSeq" id="XP_054210624.1">
    <property type="nucleotide sequence ID" value="XM_054354649.1"/>
</dbReference>
<dbReference type="RefSeq" id="XP_054210625.1">
    <property type="nucleotide sequence ID" value="XM_054354650.1"/>
</dbReference>
<dbReference type="RefSeq" id="XP_054210626.1">
    <property type="nucleotide sequence ID" value="XM_054354651.1"/>
</dbReference>
<dbReference type="PDB" id="5LZK">
    <property type="method" value="X-ray"/>
    <property type="resolution" value="1.57 A"/>
    <property type="chains" value="A/B=117-294"/>
</dbReference>
<dbReference type="PDB" id="5QHI">
    <property type="method" value="X-ray"/>
    <property type="resolution" value="1.73 A"/>
    <property type="chains" value="A/B=117-294"/>
</dbReference>
<dbReference type="PDB" id="5QHJ">
    <property type="method" value="X-ray"/>
    <property type="resolution" value="1.68 A"/>
    <property type="chains" value="A/B=117-294"/>
</dbReference>
<dbReference type="PDB" id="5QHK">
    <property type="method" value="X-ray"/>
    <property type="resolution" value="1.61 A"/>
    <property type="chains" value="A/B=117-294"/>
</dbReference>
<dbReference type="PDB" id="5QHL">
    <property type="method" value="X-ray"/>
    <property type="resolution" value="1.68 A"/>
    <property type="chains" value="A/B=117-294"/>
</dbReference>
<dbReference type="PDB" id="5QHM">
    <property type="method" value="X-ray"/>
    <property type="resolution" value="1.79 A"/>
    <property type="chains" value="A=117-294"/>
</dbReference>
<dbReference type="PDB" id="5QHN">
    <property type="method" value="X-ray"/>
    <property type="resolution" value="1.73 A"/>
    <property type="chains" value="A=117-294"/>
</dbReference>
<dbReference type="PDB" id="5QHO">
    <property type="method" value="X-ray"/>
    <property type="resolution" value="1.66 A"/>
    <property type="chains" value="A=117-294"/>
</dbReference>
<dbReference type="PDB" id="5QHP">
    <property type="method" value="X-ray"/>
    <property type="resolution" value="2.06 A"/>
    <property type="chains" value="A=117-294"/>
</dbReference>
<dbReference type="PDB" id="5QHQ">
    <property type="method" value="X-ray"/>
    <property type="resolution" value="1.96 A"/>
    <property type="chains" value="A=117-294"/>
</dbReference>
<dbReference type="PDB" id="5QHR">
    <property type="method" value="X-ray"/>
    <property type="resolution" value="1.68 A"/>
    <property type="chains" value="A=117-294"/>
</dbReference>
<dbReference type="PDB" id="5QHS">
    <property type="method" value="X-ray"/>
    <property type="resolution" value="1.95 A"/>
    <property type="chains" value="A=117-294"/>
</dbReference>
<dbReference type="PDBsum" id="5LZK"/>
<dbReference type="PDBsum" id="5QHI"/>
<dbReference type="PDBsum" id="5QHJ"/>
<dbReference type="PDBsum" id="5QHK"/>
<dbReference type="PDBsum" id="5QHL"/>
<dbReference type="PDBsum" id="5QHM"/>
<dbReference type="PDBsum" id="5QHN"/>
<dbReference type="PDBsum" id="5QHO"/>
<dbReference type="PDBsum" id="5QHP"/>
<dbReference type="PDBsum" id="5QHQ"/>
<dbReference type="PDBsum" id="5QHR"/>
<dbReference type="PDBsum" id="5QHS"/>
<dbReference type="SMR" id="Q5T0W9"/>
<dbReference type="BioGRID" id="128805">
    <property type="interactions" value="161"/>
</dbReference>
<dbReference type="FunCoup" id="Q5T0W9">
    <property type="interactions" value="857"/>
</dbReference>
<dbReference type="IntAct" id="Q5T0W9">
    <property type="interactions" value="52"/>
</dbReference>
<dbReference type="MINT" id="Q5T0W9"/>
<dbReference type="STRING" id="9606.ENSP00000304078"/>
<dbReference type="GlyGen" id="Q5T0W9">
    <property type="glycosylation" value="2 sites, 1 N-linked glycan (1 site), 1 O-linked glycan (1 site)"/>
</dbReference>
<dbReference type="iPTMnet" id="Q5T0W9"/>
<dbReference type="PhosphoSitePlus" id="Q5T0W9"/>
<dbReference type="BioMuta" id="FAM83B"/>
<dbReference type="DMDM" id="74744366"/>
<dbReference type="jPOST" id="Q5T0W9"/>
<dbReference type="MassIVE" id="Q5T0W9"/>
<dbReference type="PaxDb" id="9606-ENSP00000304078"/>
<dbReference type="PeptideAtlas" id="Q5T0W9"/>
<dbReference type="ProteomicsDB" id="64210"/>
<dbReference type="ABCD" id="Q5T0W9">
    <property type="antibodies" value="1 sequenced antibody"/>
</dbReference>
<dbReference type="Antibodypedia" id="31026">
    <property type="antibodies" value="54 antibodies from 14 providers"/>
</dbReference>
<dbReference type="DNASU" id="222584"/>
<dbReference type="Ensembl" id="ENST00000306858.8">
    <property type="protein sequence ID" value="ENSP00000304078.7"/>
    <property type="gene ID" value="ENSG00000168143.9"/>
</dbReference>
<dbReference type="GeneID" id="222584"/>
<dbReference type="KEGG" id="hsa:222584"/>
<dbReference type="MANE-Select" id="ENST00000306858.8">
    <property type="protein sequence ID" value="ENSP00000304078.7"/>
    <property type="RefSeq nucleotide sequence ID" value="NM_001010872.3"/>
    <property type="RefSeq protein sequence ID" value="NP_001010872.1"/>
</dbReference>
<dbReference type="UCSC" id="uc003pck.5">
    <property type="organism name" value="human"/>
</dbReference>
<dbReference type="AGR" id="HGNC:21357"/>
<dbReference type="CTD" id="222584"/>
<dbReference type="DisGeNET" id="222584"/>
<dbReference type="GeneCards" id="FAM83B"/>
<dbReference type="HGNC" id="HGNC:21357">
    <property type="gene designation" value="FAM83B"/>
</dbReference>
<dbReference type="HPA" id="ENSG00000168143">
    <property type="expression patterns" value="Tissue enhanced (esophagus, skin)"/>
</dbReference>
<dbReference type="neXtProt" id="NX_Q5T0W9"/>
<dbReference type="OpenTargets" id="ENSG00000168143"/>
<dbReference type="PharmGKB" id="PA134987811"/>
<dbReference type="VEuPathDB" id="HostDB:ENSG00000168143"/>
<dbReference type="eggNOG" id="ENOG502RPYE">
    <property type="taxonomic scope" value="Eukaryota"/>
</dbReference>
<dbReference type="GeneTree" id="ENSGT00940000157889"/>
<dbReference type="HOGENOM" id="CLU_011804_0_0_1"/>
<dbReference type="InParanoid" id="Q5T0W9"/>
<dbReference type="OMA" id="GYKPHFI"/>
<dbReference type="OrthoDB" id="8443577at2759"/>
<dbReference type="PAN-GO" id="Q5T0W9">
    <property type="GO annotations" value="4 GO annotations based on evolutionary models"/>
</dbReference>
<dbReference type="PhylomeDB" id="Q5T0W9"/>
<dbReference type="TreeFam" id="TF330777"/>
<dbReference type="PathwayCommons" id="Q5T0W9"/>
<dbReference type="Reactome" id="R-HSA-177929">
    <property type="pathway name" value="Signaling by EGFR"/>
</dbReference>
<dbReference type="Reactome" id="R-HSA-9696264">
    <property type="pathway name" value="RND3 GTPase cycle"/>
</dbReference>
<dbReference type="Reactome" id="R-HSA-9696270">
    <property type="pathway name" value="RND2 GTPase cycle"/>
</dbReference>
<dbReference type="Reactome" id="R-HSA-9696273">
    <property type="pathway name" value="RND1 GTPase cycle"/>
</dbReference>
<dbReference type="SignaLink" id="Q5T0W9"/>
<dbReference type="SIGNOR" id="Q5T0W9"/>
<dbReference type="BioGRID-ORCS" id="222584">
    <property type="hits" value="8 hits in 1153 CRISPR screens"/>
</dbReference>
<dbReference type="ChiTaRS" id="FAM83B">
    <property type="organism name" value="human"/>
</dbReference>
<dbReference type="GenomeRNAi" id="222584"/>
<dbReference type="Pharos" id="Q5T0W9">
    <property type="development level" value="Tbio"/>
</dbReference>
<dbReference type="PRO" id="PR:Q5T0W9"/>
<dbReference type="Proteomes" id="UP000005640">
    <property type="component" value="Chromosome 6"/>
</dbReference>
<dbReference type="RNAct" id="Q5T0W9">
    <property type="molecule type" value="protein"/>
</dbReference>
<dbReference type="Bgee" id="ENSG00000168143">
    <property type="expression patterns" value="Expressed in skin of abdomen and 70 other cell types or tissues"/>
</dbReference>
<dbReference type="GO" id="GO:0005737">
    <property type="term" value="C:cytoplasm"/>
    <property type="evidence" value="ECO:0000314"/>
    <property type="project" value="UniProtKB"/>
</dbReference>
<dbReference type="GO" id="GO:0005829">
    <property type="term" value="C:cytosol"/>
    <property type="evidence" value="ECO:0000304"/>
    <property type="project" value="Reactome"/>
</dbReference>
<dbReference type="GO" id="GO:0016020">
    <property type="term" value="C:membrane"/>
    <property type="evidence" value="ECO:0000314"/>
    <property type="project" value="UniProtKB"/>
</dbReference>
<dbReference type="GO" id="GO:0005154">
    <property type="term" value="F:epidermal growth factor receptor binding"/>
    <property type="evidence" value="ECO:0000353"/>
    <property type="project" value="UniProtKB"/>
</dbReference>
<dbReference type="GO" id="GO:0036313">
    <property type="term" value="F:phosphatidylinositol 3-kinase catalytic subunit binding"/>
    <property type="evidence" value="ECO:0000353"/>
    <property type="project" value="UniProtKB"/>
</dbReference>
<dbReference type="GO" id="GO:0036312">
    <property type="term" value="F:phosphatidylinositol 3-kinase regulatory subunit binding"/>
    <property type="evidence" value="ECO:0000353"/>
    <property type="project" value="UniProtKB"/>
</dbReference>
<dbReference type="GO" id="GO:0019901">
    <property type="term" value="F:protein kinase binding"/>
    <property type="evidence" value="ECO:0000314"/>
    <property type="project" value="UniProtKB"/>
</dbReference>
<dbReference type="GO" id="GO:0008283">
    <property type="term" value="P:cell population proliferation"/>
    <property type="evidence" value="ECO:0000315"/>
    <property type="project" value="UniProtKB"/>
</dbReference>
<dbReference type="GO" id="GO:0045742">
    <property type="term" value="P:positive regulation of epidermal growth factor receptor signaling pathway"/>
    <property type="evidence" value="ECO:0000314"/>
    <property type="project" value="UniProtKB"/>
</dbReference>
<dbReference type="GO" id="GO:0007165">
    <property type="term" value="P:signal transduction"/>
    <property type="evidence" value="ECO:0000318"/>
    <property type="project" value="GO_Central"/>
</dbReference>
<dbReference type="CDD" id="cd09182">
    <property type="entry name" value="PLDc_FAM83B_N"/>
    <property type="match status" value="1"/>
</dbReference>
<dbReference type="FunFam" id="3.30.870.10:FF:000004">
    <property type="entry name" value="protein FAM83H isoform X2"/>
    <property type="match status" value="1"/>
</dbReference>
<dbReference type="Gene3D" id="3.30.870.10">
    <property type="entry name" value="Endonuclease Chain A"/>
    <property type="match status" value="1"/>
</dbReference>
<dbReference type="InterPro" id="IPR050944">
    <property type="entry name" value="FAM83"/>
</dbReference>
<dbReference type="InterPro" id="IPR012461">
    <property type="entry name" value="SACK1"/>
</dbReference>
<dbReference type="PANTHER" id="PTHR16181">
    <property type="entry name" value="PROTEIN FAM83A-RELATED"/>
    <property type="match status" value="1"/>
</dbReference>
<dbReference type="PANTHER" id="PTHR16181:SF29">
    <property type="entry name" value="PROTEIN FAM83A-RELATED"/>
    <property type="match status" value="1"/>
</dbReference>
<dbReference type="Pfam" id="PF07894">
    <property type="entry name" value="SACK1"/>
    <property type="match status" value="1"/>
</dbReference>
<dbReference type="SUPFAM" id="SSF56024">
    <property type="entry name" value="Phospholipase D/nuclease"/>
    <property type="match status" value="1"/>
</dbReference>
<protein>
    <recommendedName>
        <fullName evidence="7">Protein FAM83B</fullName>
    </recommendedName>
</protein>
<evidence type="ECO:0000256" key="1">
    <source>
        <dbReference type="SAM" id="MobiDB-lite"/>
    </source>
</evidence>
<evidence type="ECO:0000269" key="2">
    <source>
    </source>
</evidence>
<evidence type="ECO:0000269" key="3">
    <source>
    </source>
</evidence>
<evidence type="ECO:0000269" key="4">
    <source>
    </source>
</evidence>
<evidence type="ECO:0000269" key="5">
    <source>
    </source>
</evidence>
<evidence type="ECO:0000269" key="6">
    <source>
    </source>
</evidence>
<evidence type="ECO:0000305" key="7"/>
<evidence type="ECO:0000305" key="8">
    <source>
    </source>
</evidence>
<evidence type="ECO:0000312" key="9">
    <source>
        <dbReference type="HGNC" id="HGNC:21357"/>
    </source>
</evidence>
<evidence type="ECO:0007744" key="10">
    <source>
    </source>
</evidence>
<evidence type="ECO:0007744" key="11">
    <source>
    </source>
</evidence>
<evidence type="ECO:0007744" key="12">
    <source>
    </source>
</evidence>
<evidence type="ECO:0007829" key="13">
    <source>
        <dbReference type="PDB" id="5LZK"/>
    </source>
</evidence>